<accession>Q82WS3</accession>
<gene>
    <name evidence="1" type="primary">ppc</name>
    <name type="ordered locus">NE0589</name>
</gene>
<dbReference type="EC" id="4.1.1.31" evidence="1"/>
<dbReference type="EMBL" id="AL954747">
    <property type="protein sequence ID" value="CAD84500.1"/>
    <property type="molecule type" value="Genomic_DNA"/>
</dbReference>
<dbReference type="RefSeq" id="WP_011111215.1">
    <property type="nucleotide sequence ID" value="NC_004757.1"/>
</dbReference>
<dbReference type="SMR" id="Q82WS3"/>
<dbReference type="STRING" id="228410.NE0589"/>
<dbReference type="GeneID" id="87103789"/>
<dbReference type="KEGG" id="neu:NE0589"/>
<dbReference type="eggNOG" id="COG2352">
    <property type="taxonomic scope" value="Bacteria"/>
</dbReference>
<dbReference type="HOGENOM" id="CLU_006557_2_0_4"/>
<dbReference type="OrthoDB" id="9768133at2"/>
<dbReference type="PhylomeDB" id="Q82WS3"/>
<dbReference type="Proteomes" id="UP000001416">
    <property type="component" value="Chromosome"/>
</dbReference>
<dbReference type="GO" id="GO:0005829">
    <property type="term" value="C:cytosol"/>
    <property type="evidence" value="ECO:0007669"/>
    <property type="project" value="TreeGrafter"/>
</dbReference>
<dbReference type="GO" id="GO:0000287">
    <property type="term" value="F:magnesium ion binding"/>
    <property type="evidence" value="ECO:0007669"/>
    <property type="project" value="UniProtKB-UniRule"/>
</dbReference>
<dbReference type="GO" id="GO:0008964">
    <property type="term" value="F:phosphoenolpyruvate carboxylase activity"/>
    <property type="evidence" value="ECO:0007669"/>
    <property type="project" value="UniProtKB-UniRule"/>
</dbReference>
<dbReference type="GO" id="GO:0015977">
    <property type="term" value="P:carbon fixation"/>
    <property type="evidence" value="ECO:0007669"/>
    <property type="project" value="UniProtKB-UniRule"/>
</dbReference>
<dbReference type="GO" id="GO:0006107">
    <property type="term" value="P:oxaloacetate metabolic process"/>
    <property type="evidence" value="ECO:0007669"/>
    <property type="project" value="UniProtKB-UniRule"/>
</dbReference>
<dbReference type="GO" id="GO:0006099">
    <property type="term" value="P:tricarboxylic acid cycle"/>
    <property type="evidence" value="ECO:0007669"/>
    <property type="project" value="InterPro"/>
</dbReference>
<dbReference type="Gene3D" id="1.20.1440.90">
    <property type="entry name" value="Phosphoenolpyruvate/pyruvate domain"/>
    <property type="match status" value="1"/>
</dbReference>
<dbReference type="HAMAP" id="MF_00595">
    <property type="entry name" value="PEPcase_type1"/>
    <property type="match status" value="1"/>
</dbReference>
<dbReference type="InterPro" id="IPR021135">
    <property type="entry name" value="PEP_COase"/>
</dbReference>
<dbReference type="InterPro" id="IPR022805">
    <property type="entry name" value="PEP_COase_bac/pln-type"/>
</dbReference>
<dbReference type="InterPro" id="IPR018129">
    <property type="entry name" value="PEP_COase_Lys_AS"/>
</dbReference>
<dbReference type="InterPro" id="IPR033129">
    <property type="entry name" value="PEPCASE_His_AS"/>
</dbReference>
<dbReference type="InterPro" id="IPR015813">
    <property type="entry name" value="Pyrv/PenolPyrv_kinase-like_dom"/>
</dbReference>
<dbReference type="NCBIfam" id="NF000584">
    <property type="entry name" value="PRK00009.1"/>
    <property type="match status" value="1"/>
</dbReference>
<dbReference type="PANTHER" id="PTHR30523">
    <property type="entry name" value="PHOSPHOENOLPYRUVATE CARBOXYLASE"/>
    <property type="match status" value="1"/>
</dbReference>
<dbReference type="PANTHER" id="PTHR30523:SF6">
    <property type="entry name" value="PHOSPHOENOLPYRUVATE CARBOXYLASE"/>
    <property type="match status" value="1"/>
</dbReference>
<dbReference type="Pfam" id="PF00311">
    <property type="entry name" value="PEPcase"/>
    <property type="match status" value="1"/>
</dbReference>
<dbReference type="PRINTS" id="PR00150">
    <property type="entry name" value="PEPCARBXLASE"/>
</dbReference>
<dbReference type="SUPFAM" id="SSF51621">
    <property type="entry name" value="Phosphoenolpyruvate/pyruvate domain"/>
    <property type="match status" value="1"/>
</dbReference>
<dbReference type="PROSITE" id="PS00781">
    <property type="entry name" value="PEPCASE_1"/>
    <property type="match status" value="1"/>
</dbReference>
<dbReference type="PROSITE" id="PS00393">
    <property type="entry name" value="PEPCASE_2"/>
    <property type="match status" value="1"/>
</dbReference>
<organism>
    <name type="scientific">Nitrosomonas europaea (strain ATCC 19718 / CIP 103999 / KCTC 2705 / NBRC 14298)</name>
    <dbReference type="NCBI Taxonomy" id="228410"/>
    <lineage>
        <taxon>Bacteria</taxon>
        <taxon>Pseudomonadati</taxon>
        <taxon>Pseudomonadota</taxon>
        <taxon>Betaproteobacteria</taxon>
        <taxon>Nitrosomonadales</taxon>
        <taxon>Nitrosomonadaceae</taxon>
        <taxon>Nitrosomonas</taxon>
    </lineage>
</organism>
<proteinExistence type="inferred from homology"/>
<comment type="function">
    <text evidence="1">Forms oxaloacetate, a four-carbon dicarboxylic acid source for the tricarboxylic acid cycle.</text>
</comment>
<comment type="catalytic activity">
    <reaction evidence="1">
        <text>oxaloacetate + phosphate = phosphoenolpyruvate + hydrogencarbonate</text>
        <dbReference type="Rhea" id="RHEA:28370"/>
        <dbReference type="ChEBI" id="CHEBI:16452"/>
        <dbReference type="ChEBI" id="CHEBI:17544"/>
        <dbReference type="ChEBI" id="CHEBI:43474"/>
        <dbReference type="ChEBI" id="CHEBI:58702"/>
        <dbReference type="EC" id="4.1.1.31"/>
    </reaction>
</comment>
<comment type="cofactor">
    <cofactor evidence="1">
        <name>Mg(2+)</name>
        <dbReference type="ChEBI" id="CHEBI:18420"/>
    </cofactor>
</comment>
<comment type="similarity">
    <text evidence="1">Belongs to the PEPCase type 1 family.</text>
</comment>
<protein>
    <recommendedName>
        <fullName evidence="1">Phosphoenolpyruvate carboxylase</fullName>
        <shortName evidence="1">PEPC</shortName>
        <shortName evidence="1">PEPCase</shortName>
        <ecNumber evidence="1">4.1.1.31</ecNumber>
    </recommendedName>
</protein>
<evidence type="ECO:0000255" key="1">
    <source>
        <dbReference type="HAMAP-Rule" id="MF_00595"/>
    </source>
</evidence>
<sequence>MSLNTRANIIPEKNTPNEKDYPLREDIRLLGRMLGDTIRELEGETMFNLVETIRQTSVRFRRDQDEAAEHELDTILNHLSHKETIAVVRAFSYFSLLSNIAEDLHHNRRRRAHLRAGSPPQDGSVTLALQRVVKKGIDAEQLQNFFASALISPVLTAHPTEVQRRSILDYQLKIQRLLKERDRTQLTPNEMRHNEEDLRSAIQTLWQTRVLRSVRLTVQDEIENGLIYYHYTFLRQIPYIYAKLEDILERHMDKAAPRIASFLRIGSWIGGDRDGNPFVTHQIMLHAAERHSALILDFYISEVERIGQTMSLSERLIKVSSDLEGLASTAPGLPASRIDEPYRRVFLGIHARLIATSRHLGSSIRGCCQENNAEPYADSAEFVHDLDIVIRSLRQHRSDRLAQGALRDLRRAADVFGFHLAPLDMRQHSKIHEQVISELYEKNTRDDRNYLEMSRSERVEWLLAELRHPRSLVTSFSDFSDVTQGELRILKMAAEIQRRFGHAALPNYIISMATGVVHILEVALLLKEAGLLQFGDDPRSTVNIIPLFETIDDLRGCASVMDELFSLPDYRKLLLSRDNLQEVMLGYSDSNKDGGFVTSNWEIYKAEIELTRVFDRHGVRLRLFHGRGGTVGRGGGPSYQGILAQPPGSVSGQIRLTEQGEVIASKYTDPEIGRRNLETLVAATIESTLLDRDAVHYHAPHYHQIMEELSSSACAAYRDLVYKTPGFKQFFLESTPIREIAGLHIGSRPTSRKPSDKIEDLRAIPWVFSWSLNRTMIPGWYGFGTAVENFVQQAGNEQEALKQLQEMYRTWPFLQTLLSNMDMVLSKSDLGIASRYAELVTDPELRQSVFTSIRTEWELCMKWLFAITGYSELLQDNPTLARSIRIRTPYIDPLNHLQIELLRRYRSGDDDDTVRRAIHLTINGVATGLRNSG</sequence>
<feature type="chain" id="PRO_0000166605" description="Phosphoenolpyruvate carboxylase">
    <location>
        <begin position="1"/>
        <end position="933"/>
    </location>
</feature>
<feature type="active site" evidence="1">
    <location>
        <position position="158"/>
    </location>
</feature>
<feature type="active site" evidence="1">
    <location>
        <position position="592"/>
    </location>
</feature>
<name>CAPP_NITEU</name>
<keyword id="KW-0120">Carbon dioxide fixation</keyword>
<keyword id="KW-0456">Lyase</keyword>
<keyword id="KW-0460">Magnesium</keyword>
<keyword id="KW-1185">Reference proteome</keyword>
<reference key="1">
    <citation type="journal article" date="2003" name="J. Bacteriol.">
        <title>Complete genome sequence of the ammonia-oxidizing bacterium and obligate chemolithoautotroph Nitrosomonas europaea.</title>
        <authorList>
            <person name="Chain P."/>
            <person name="Lamerdin J.E."/>
            <person name="Larimer F.W."/>
            <person name="Regala W."/>
            <person name="Lao V."/>
            <person name="Land M.L."/>
            <person name="Hauser L."/>
            <person name="Hooper A.B."/>
            <person name="Klotz M.G."/>
            <person name="Norton J."/>
            <person name="Sayavedra-Soto L.A."/>
            <person name="Arciero D.M."/>
            <person name="Hommes N.G."/>
            <person name="Whittaker M.M."/>
            <person name="Arp D.J."/>
        </authorList>
    </citation>
    <scope>NUCLEOTIDE SEQUENCE [LARGE SCALE GENOMIC DNA]</scope>
    <source>
        <strain>ATCC 19718 / CIP 103999 / KCTC 2705 / NBRC 14298</strain>
    </source>
</reference>